<organism>
    <name type="scientific">Streptomyces coelicolor (strain ATCC BAA-471 / A3(2) / M145)</name>
    <dbReference type="NCBI Taxonomy" id="100226"/>
    <lineage>
        <taxon>Bacteria</taxon>
        <taxon>Bacillati</taxon>
        <taxon>Actinomycetota</taxon>
        <taxon>Actinomycetes</taxon>
        <taxon>Kitasatosporales</taxon>
        <taxon>Streptomycetaceae</taxon>
        <taxon>Streptomyces</taxon>
        <taxon>Streptomyces albidoflavus group</taxon>
    </lineage>
</organism>
<accession>Q8CJM9</accession>
<reference key="1">
    <citation type="journal article" date="2002" name="Nature">
        <title>Complete genome sequence of the model actinomycete Streptomyces coelicolor A3(2).</title>
        <authorList>
            <person name="Bentley S.D."/>
            <person name="Chater K.F."/>
            <person name="Cerdeno-Tarraga A.-M."/>
            <person name="Challis G.L."/>
            <person name="Thomson N.R."/>
            <person name="James K.D."/>
            <person name="Harris D.E."/>
            <person name="Quail M.A."/>
            <person name="Kieser H."/>
            <person name="Harper D."/>
            <person name="Bateman A."/>
            <person name="Brown S."/>
            <person name="Chandra G."/>
            <person name="Chen C.W."/>
            <person name="Collins M."/>
            <person name="Cronin A."/>
            <person name="Fraser A."/>
            <person name="Goble A."/>
            <person name="Hidalgo J."/>
            <person name="Hornsby T."/>
            <person name="Howarth S."/>
            <person name="Huang C.-H."/>
            <person name="Kieser T."/>
            <person name="Larke L."/>
            <person name="Murphy L.D."/>
            <person name="Oliver K."/>
            <person name="O'Neil S."/>
            <person name="Rabbinowitsch E."/>
            <person name="Rajandream M.A."/>
            <person name="Rutherford K.M."/>
            <person name="Rutter S."/>
            <person name="Seeger K."/>
            <person name="Saunders D."/>
            <person name="Sharp S."/>
            <person name="Squares R."/>
            <person name="Squares S."/>
            <person name="Taylor K."/>
            <person name="Warren T."/>
            <person name="Wietzorrek A."/>
            <person name="Woodward J.R."/>
            <person name="Barrell B.G."/>
            <person name="Parkhill J."/>
            <person name="Hopwood D.A."/>
        </authorList>
    </citation>
    <scope>NUCLEOTIDE SEQUENCE [LARGE SCALE GENOMIC DNA]</scope>
    <source>
        <strain>ATCC BAA-471 / A3(2) / M145</strain>
    </source>
</reference>
<protein>
    <recommendedName>
        <fullName evidence="1">NAD-dependent protein deacetylase 2</fullName>
        <ecNumber evidence="1 2">2.3.1.286</ecNumber>
    </recommendedName>
    <alternativeName>
        <fullName evidence="1">Regulatory protein SIR2 homolog 2</fullName>
    </alternativeName>
</protein>
<name>NPD2_STRCO</name>
<gene>
    <name evidence="1" type="primary">cobB2</name>
    <name type="ordered locus">SCO6464</name>
</gene>
<dbReference type="EC" id="2.3.1.286" evidence="1 2"/>
<dbReference type="EMBL" id="AL939127">
    <property type="protein sequence ID" value="CAD55518.1"/>
    <property type="molecule type" value="Genomic_DNA"/>
</dbReference>
<dbReference type="PIR" id="T34648">
    <property type="entry name" value="T34648"/>
</dbReference>
<dbReference type="PIR" id="T35951">
    <property type="entry name" value="T35951"/>
</dbReference>
<dbReference type="RefSeq" id="NP_733702.1">
    <property type="nucleotide sequence ID" value="NC_003888.3"/>
</dbReference>
<dbReference type="RefSeq" id="WP_011030941.1">
    <property type="nucleotide sequence ID" value="NZ_VNID01000002.1"/>
</dbReference>
<dbReference type="SMR" id="Q8CJM9"/>
<dbReference type="FunCoup" id="Q8CJM9">
    <property type="interactions" value="351"/>
</dbReference>
<dbReference type="STRING" id="100226.gene:17764121"/>
<dbReference type="PaxDb" id="100226-SCO6464"/>
<dbReference type="KEGG" id="sco:SCO6464"/>
<dbReference type="PATRIC" id="fig|100226.15.peg.6564"/>
<dbReference type="eggNOG" id="COG0846">
    <property type="taxonomic scope" value="Bacteria"/>
</dbReference>
<dbReference type="HOGENOM" id="CLU_023643_3_0_11"/>
<dbReference type="InParanoid" id="Q8CJM9"/>
<dbReference type="OrthoDB" id="9800582at2"/>
<dbReference type="PhylomeDB" id="Q8CJM9"/>
<dbReference type="Proteomes" id="UP000001973">
    <property type="component" value="Chromosome"/>
</dbReference>
<dbReference type="GO" id="GO:0005737">
    <property type="term" value="C:cytoplasm"/>
    <property type="evidence" value="ECO:0007669"/>
    <property type="project" value="UniProtKB-SubCell"/>
</dbReference>
<dbReference type="GO" id="GO:0017136">
    <property type="term" value="F:histone deacetylase activity, NAD-dependent"/>
    <property type="evidence" value="ECO:0000318"/>
    <property type="project" value="GO_Central"/>
</dbReference>
<dbReference type="GO" id="GO:0070403">
    <property type="term" value="F:NAD+ binding"/>
    <property type="evidence" value="ECO:0000318"/>
    <property type="project" value="GO_Central"/>
</dbReference>
<dbReference type="GO" id="GO:0008270">
    <property type="term" value="F:zinc ion binding"/>
    <property type="evidence" value="ECO:0007669"/>
    <property type="project" value="UniProtKB-UniRule"/>
</dbReference>
<dbReference type="Gene3D" id="3.30.1600.10">
    <property type="entry name" value="SIR2/SIRT2 'Small Domain"/>
    <property type="match status" value="1"/>
</dbReference>
<dbReference type="Gene3D" id="3.40.50.1220">
    <property type="entry name" value="TPP-binding domain"/>
    <property type="match status" value="1"/>
</dbReference>
<dbReference type="HAMAP" id="MF_01968">
    <property type="entry name" value="Sirtuin_ClassU"/>
    <property type="match status" value="1"/>
</dbReference>
<dbReference type="InterPro" id="IPR029035">
    <property type="entry name" value="DHS-like_NAD/FAD-binding_dom"/>
</dbReference>
<dbReference type="InterPro" id="IPR050134">
    <property type="entry name" value="NAD-dep_sirtuin_deacylases"/>
</dbReference>
<dbReference type="InterPro" id="IPR003000">
    <property type="entry name" value="Sirtuin"/>
</dbReference>
<dbReference type="InterPro" id="IPR026591">
    <property type="entry name" value="Sirtuin_cat_small_dom_sf"/>
</dbReference>
<dbReference type="InterPro" id="IPR028628">
    <property type="entry name" value="Sirtuin_class_U"/>
</dbReference>
<dbReference type="InterPro" id="IPR026590">
    <property type="entry name" value="Ssirtuin_cat_dom"/>
</dbReference>
<dbReference type="PANTHER" id="PTHR11085:SF4">
    <property type="entry name" value="NAD-DEPENDENT PROTEIN DEACYLASE"/>
    <property type="match status" value="1"/>
</dbReference>
<dbReference type="PANTHER" id="PTHR11085">
    <property type="entry name" value="NAD-DEPENDENT PROTEIN DEACYLASE SIRTUIN-5, MITOCHONDRIAL-RELATED"/>
    <property type="match status" value="1"/>
</dbReference>
<dbReference type="Pfam" id="PF02146">
    <property type="entry name" value="SIR2"/>
    <property type="match status" value="1"/>
</dbReference>
<dbReference type="SUPFAM" id="SSF52467">
    <property type="entry name" value="DHS-like NAD/FAD-binding domain"/>
    <property type="match status" value="1"/>
</dbReference>
<dbReference type="PROSITE" id="PS50305">
    <property type="entry name" value="SIRTUIN"/>
    <property type="match status" value="1"/>
</dbReference>
<evidence type="ECO:0000255" key="1">
    <source>
        <dbReference type="HAMAP-Rule" id="MF_01968"/>
    </source>
</evidence>
<evidence type="ECO:0000255" key="2">
    <source>
        <dbReference type="PROSITE-ProRule" id="PRU00236"/>
    </source>
</evidence>
<keyword id="KW-0963">Cytoplasm</keyword>
<keyword id="KW-0479">Metal-binding</keyword>
<keyword id="KW-0520">NAD</keyword>
<keyword id="KW-1185">Reference proteome</keyword>
<keyword id="KW-0808">Transferase</keyword>
<keyword id="KW-0862">Zinc</keyword>
<sequence>MTGKPLVAILSGAGVSTDSGIPDYRGPNGLWRRDPEAEKLVTYEYYMGDPEIRRRSWLMRRDSAALHAEPNAAHRAVADLERRGVPVRVLTQNVDGLHQLAGVSARKVLELHGTARDCVCTGCGARGPMADVLARIEAGEDDPPCLDCGGVLKTATVMFGERLDPVVLGEAAAISKACQVFVAVGTSLQVEPAAGLARVAVEHGARLVVVNAEPTPYDELADEVIREPIGSALPALLRGLG</sequence>
<proteinExistence type="inferred from homology"/>
<feature type="chain" id="PRO_0000110360" description="NAD-dependent protein deacetylase 2">
    <location>
        <begin position="1"/>
        <end position="241"/>
    </location>
</feature>
<feature type="domain" description="Deacetylase sirtuin-type" evidence="2">
    <location>
        <begin position="1"/>
        <end position="241"/>
    </location>
</feature>
<feature type="active site" description="Proton acceptor" evidence="2">
    <location>
        <position position="112"/>
    </location>
</feature>
<feature type="binding site" evidence="1">
    <location>
        <position position="13"/>
    </location>
    <ligand>
        <name>NAD(+)</name>
        <dbReference type="ChEBI" id="CHEBI:57540"/>
    </ligand>
</feature>
<feature type="binding site" evidence="1">
    <location>
        <position position="17"/>
    </location>
    <ligand>
        <name>NAD(+)</name>
        <dbReference type="ChEBI" id="CHEBI:57540"/>
    </ligand>
</feature>
<feature type="binding site" evidence="1">
    <location>
        <position position="25"/>
    </location>
    <ligand>
        <name>NAD(+)</name>
        <dbReference type="ChEBI" id="CHEBI:57540"/>
    </ligand>
</feature>
<feature type="binding site" evidence="1">
    <location>
        <position position="92"/>
    </location>
    <ligand>
        <name>NAD(+)</name>
        <dbReference type="ChEBI" id="CHEBI:57540"/>
    </ligand>
</feature>
<feature type="binding site" evidence="1">
    <location>
        <position position="94"/>
    </location>
    <ligand>
        <name>NAD(+)</name>
        <dbReference type="ChEBI" id="CHEBI:57540"/>
    </ligand>
</feature>
<feature type="binding site" evidence="1">
    <location>
        <position position="94"/>
    </location>
    <ligand>
        <name>nicotinamide</name>
        <dbReference type="ChEBI" id="CHEBI:17154"/>
    </ligand>
</feature>
<feature type="binding site" evidence="1">
    <location>
        <position position="95"/>
    </location>
    <ligand>
        <name>NAD(+)</name>
        <dbReference type="ChEBI" id="CHEBI:57540"/>
    </ligand>
</feature>
<feature type="binding site" evidence="1">
    <location>
        <position position="95"/>
    </location>
    <ligand>
        <name>nicotinamide</name>
        <dbReference type="ChEBI" id="CHEBI:17154"/>
    </ligand>
</feature>
<feature type="binding site" evidence="1">
    <location>
        <position position="112"/>
    </location>
    <ligand>
        <name>NAD(+)</name>
        <dbReference type="ChEBI" id="CHEBI:57540"/>
    </ligand>
</feature>
<feature type="binding site" evidence="1">
    <location>
        <position position="120"/>
    </location>
    <ligand>
        <name>Zn(2+)</name>
        <dbReference type="ChEBI" id="CHEBI:29105"/>
    </ligand>
</feature>
<feature type="binding site" evidence="1">
    <location>
        <position position="123"/>
    </location>
    <ligand>
        <name>Zn(2+)</name>
        <dbReference type="ChEBI" id="CHEBI:29105"/>
    </ligand>
</feature>
<feature type="binding site" evidence="1">
    <location>
        <position position="145"/>
    </location>
    <ligand>
        <name>Zn(2+)</name>
        <dbReference type="ChEBI" id="CHEBI:29105"/>
    </ligand>
</feature>
<feature type="binding site" evidence="1">
    <location>
        <position position="148"/>
    </location>
    <ligand>
        <name>Zn(2+)</name>
        <dbReference type="ChEBI" id="CHEBI:29105"/>
    </ligand>
</feature>
<feature type="binding site" evidence="1">
    <location>
        <position position="186"/>
    </location>
    <ligand>
        <name>NAD(+)</name>
        <dbReference type="ChEBI" id="CHEBI:57540"/>
    </ligand>
</feature>
<feature type="binding site" evidence="1">
    <location>
        <position position="187"/>
    </location>
    <ligand>
        <name>NAD(+)</name>
        <dbReference type="ChEBI" id="CHEBI:57540"/>
    </ligand>
</feature>
<feature type="binding site" evidence="1">
    <location>
        <position position="211"/>
    </location>
    <ligand>
        <name>NAD(+)</name>
        <dbReference type="ChEBI" id="CHEBI:57540"/>
    </ligand>
</feature>
<feature type="binding site" evidence="1">
    <location>
        <position position="229"/>
    </location>
    <ligand>
        <name>NAD(+)</name>
        <dbReference type="ChEBI" id="CHEBI:57540"/>
    </ligand>
</feature>
<comment type="function">
    <text evidence="1">NAD-dependent protein deacetylase which modulates the activities of several enzymes which are inactive in their acetylated form.</text>
</comment>
<comment type="catalytic activity">
    <reaction evidence="1">
        <text>N(6)-acetyl-L-lysyl-[protein] + NAD(+) + H2O = 2''-O-acetyl-ADP-D-ribose + nicotinamide + L-lysyl-[protein]</text>
        <dbReference type="Rhea" id="RHEA:43636"/>
        <dbReference type="Rhea" id="RHEA-COMP:9752"/>
        <dbReference type="Rhea" id="RHEA-COMP:10731"/>
        <dbReference type="ChEBI" id="CHEBI:15377"/>
        <dbReference type="ChEBI" id="CHEBI:17154"/>
        <dbReference type="ChEBI" id="CHEBI:29969"/>
        <dbReference type="ChEBI" id="CHEBI:57540"/>
        <dbReference type="ChEBI" id="CHEBI:61930"/>
        <dbReference type="ChEBI" id="CHEBI:83767"/>
        <dbReference type="EC" id="2.3.1.286"/>
    </reaction>
</comment>
<comment type="cofactor">
    <cofactor evidence="1">
        <name>Zn(2+)</name>
        <dbReference type="ChEBI" id="CHEBI:29105"/>
    </cofactor>
    <text evidence="1">Binds 1 zinc ion per subunit.</text>
</comment>
<comment type="subcellular location">
    <subcellularLocation>
        <location evidence="1">Cytoplasm</location>
    </subcellularLocation>
</comment>
<comment type="similarity">
    <text evidence="1">Belongs to the sirtuin family. Class U subfamily.</text>
</comment>